<comment type="function">
    <text>This protein may play a role in packaging, transport or release of neurotransmitters.</text>
</comment>
<comment type="subcellular location">
    <subcellularLocation>
        <location>Cytoplasmic vesicle</location>
        <location>Secretory vesicle</location>
        <location>Synaptic vesicle membrane</location>
        <topology>Single-pass type IV membrane protein</topology>
    </subcellularLocation>
    <subcellularLocation>
        <location>Synapse</location>
        <location>Synaptosome</location>
    </subcellularLocation>
    <text>Neuronal synaptic vesicles.</text>
</comment>
<comment type="tissue specificity">
    <text>Nervous system specific.</text>
</comment>
<comment type="similarity">
    <text evidence="4">Belongs to the synaptobrevin family.</text>
</comment>
<protein>
    <recommendedName>
        <fullName>Synaptobrevin</fullName>
    </recommendedName>
    <alternativeName>
        <fullName>Synaptic vesicle-associated integral membrane protein</fullName>
    </alternativeName>
    <alternativeName>
        <fullName>VAMP-1</fullName>
    </alternativeName>
</protein>
<evidence type="ECO:0000255" key="1"/>
<evidence type="ECO:0000255" key="2">
    <source>
        <dbReference type="PROSITE-ProRule" id="PRU00290"/>
    </source>
</evidence>
<evidence type="ECO:0000256" key="3">
    <source>
        <dbReference type="SAM" id="MobiDB-lite"/>
    </source>
</evidence>
<evidence type="ECO:0000305" key="4"/>
<keyword id="KW-0175">Coiled coil</keyword>
<keyword id="KW-0968">Cytoplasmic vesicle</keyword>
<keyword id="KW-0472">Membrane</keyword>
<keyword id="KW-0770">Synapse</keyword>
<keyword id="KW-0771">Synaptosome</keyword>
<keyword id="KW-0812">Transmembrane</keyword>
<keyword id="KW-1133">Transmembrane helix</keyword>
<organism>
    <name type="scientific">Tetronarce californica</name>
    <name type="common">Pacific electric ray</name>
    <name type="synonym">Torpedo californica</name>
    <dbReference type="NCBI Taxonomy" id="7787"/>
    <lineage>
        <taxon>Eukaryota</taxon>
        <taxon>Metazoa</taxon>
        <taxon>Chordata</taxon>
        <taxon>Craniata</taxon>
        <taxon>Vertebrata</taxon>
        <taxon>Chondrichthyes</taxon>
        <taxon>Elasmobranchii</taxon>
        <taxon>Batoidea</taxon>
        <taxon>Torpediniformes</taxon>
        <taxon>Torpedinidae</taxon>
        <taxon>Tetronarce</taxon>
    </lineage>
</organism>
<reference key="1">
    <citation type="journal article" date="1988" name="Proc. Natl. Acad. Sci. U.S.A.">
        <title>VAMP-1: a synaptic vesicle-associated integral membrane protein.</title>
        <authorList>
            <person name="Trimble W.S."/>
            <person name="Cowen D.M."/>
            <person name="Scheller R.H."/>
        </authorList>
    </citation>
    <scope>NUCLEOTIDE SEQUENCE [MRNA]</scope>
</reference>
<name>SYB_TETCF</name>
<proteinExistence type="evidence at transcript level"/>
<feature type="chain" id="PRO_0000206743" description="Synaptobrevin">
    <location>
        <begin position="1"/>
        <end position="120"/>
    </location>
</feature>
<feature type="topological domain" description="Cytoplasmic" evidence="1">
    <location>
        <begin position="1"/>
        <end position="98"/>
    </location>
</feature>
<feature type="transmembrane region" description="Helical; Anchor for type IV membrane protein" evidence="1">
    <location>
        <begin position="99"/>
        <end position="118"/>
    </location>
</feature>
<feature type="topological domain" description="Vesicular" evidence="1">
    <location>
        <begin position="119"/>
        <end position="120"/>
    </location>
</feature>
<feature type="domain" description="v-SNARE coiled-coil homology" evidence="2">
    <location>
        <begin position="35"/>
        <end position="95"/>
    </location>
</feature>
<feature type="region of interest" description="Disordered" evidence="3">
    <location>
        <begin position="1"/>
        <end position="38"/>
    </location>
</feature>
<feature type="compositionally biased region" description="Polar residues" evidence="3">
    <location>
        <begin position="29"/>
        <end position="38"/>
    </location>
</feature>
<dbReference type="EMBL" id="J03777">
    <property type="protein sequence ID" value="AAA49286.1"/>
    <property type="molecule type" value="mRNA"/>
</dbReference>
<dbReference type="PIR" id="A32146">
    <property type="entry name" value="A32146"/>
</dbReference>
<dbReference type="SMR" id="P13701"/>
<dbReference type="GO" id="GO:0043005">
    <property type="term" value="C:neuron projection"/>
    <property type="evidence" value="ECO:0007669"/>
    <property type="project" value="UniProtKB-KW"/>
</dbReference>
<dbReference type="GO" id="GO:0030672">
    <property type="term" value="C:synaptic vesicle membrane"/>
    <property type="evidence" value="ECO:0000314"/>
    <property type="project" value="SynGO"/>
</dbReference>
<dbReference type="GO" id="GO:0016192">
    <property type="term" value="P:vesicle-mediated transport"/>
    <property type="evidence" value="ECO:0007669"/>
    <property type="project" value="InterPro"/>
</dbReference>
<dbReference type="CDD" id="cd15870">
    <property type="entry name" value="R-SNARE_VAMP2"/>
    <property type="match status" value="1"/>
</dbReference>
<dbReference type="FunFam" id="1.20.5.110:FF:000013">
    <property type="entry name" value="Vesicle-associated membrane protein 2"/>
    <property type="match status" value="1"/>
</dbReference>
<dbReference type="Gene3D" id="1.20.5.110">
    <property type="match status" value="1"/>
</dbReference>
<dbReference type="InterPro" id="IPR001388">
    <property type="entry name" value="Synaptobrevin-like"/>
</dbReference>
<dbReference type="InterPro" id="IPR016444">
    <property type="entry name" value="Synaptobrevin/VAMP"/>
</dbReference>
<dbReference type="InterPro" id="IPR042855">
    <property type="entry name" value="V_SNARE_CC"/>
</dbReference>
<dbReference type="PANTHER" id="PTHR45701">
    <property type="entry name" value="SYNAPTOBREVIN FAMILY MEMBER"/>
    <property type="match status" value="1"/>
</dbReference>
<dbReference type="Pfam" id="PF00957">
    <property type="entry name" value="Synaptobrevin"/>
    <property type="match status" value="1"/>
</dbReference>
<dbReference type="PIRSF" id="PIRSF005409">
    <property type="entry name" value="Synaptobrevin_euk"/>
    <property type="match status" value="1"/>
</dbReference>
<dbReference type="PRINTS" id="PR00219">
    <property type="entry name" value="SYNAPTOBREVN"/>
</dbReference>
<dbReference type="SUPFAM" id="SSF58038">
    <property type="entry name" value="SNARE fusion complex"/>
    <property type="match status" value="1"/>
</dbReference>
<dbReference type="PROSITE" id="PS00417">
    <property type="entry name" value="SYNAPTOBREVIN"/>
    <property type="match status" value="1"/>
</dbReference>
<dbReference type="PROSITE" id="PS50892">
    <property type="entry name" value="V_SNARE"/>
    <property type="match status" value="1"/>
</dbReference>
<accession>P13701</accession>
<sequence>MSAPPSGPAPDAQGGAPGQPTGPPGAPPNTTSNRRLQQTQAQVEEVVDIIRVNVDKVLERDQKLSELDDRADALQAGASQFESSAAKLKRKYWWKNCKMMIMLGGIGAIIVIVIIIYFFT</sequence>